<evidence type="ECO:0000255" key="1">
    <source>
        <dbReference type="HAMAP-Rule" id="MF_00223"/>
    </source>
</evidence>
<keyword id="KW-0342">GTP-binding</keyword>
<keyword id="KW-0378">Hydrolase</keyword>
<keyword id="KW-0479">Metal-binding</keyword>
<keyword id="KW-0547">Nucleotide-binding</keyword>
<keyword id="KW-0554">One-carbon metabolism</keyword>
<keyword id="KW-0862">Zinc</keyword>
<dbReference type="EC" id="3.5.4.16" evidence="1"/>
<dbReference type="EMBL" id="CP000901">
    <property type="protein sequence ID" value="ABX87571.1"/>
    <property type="molecule type" value="Genomic_DNA"/>
</dbReference>
<dbReference type="RefSeq" id="WP_002211960.1">
    <property type="nucleotide sequence ID" value="NZ_CP009935.1"/>
</dbReference>
<dbReference type="SMR" id="A9R1B1"/>
<dbReference type="GeneID" id="57977063"/>
<dbReference type="KEGG" id="ypg:YpAngola_A3014"/>
<dbReference type="PATRIC" id="fig|349746.12.peg.4065"/>
<dbReference type="UniPathway" id="UPA00848">
    <property type="reaction ID" value="UER00151"/>
</dbReference>
<dbReference type="GO" id="GO:0005737">
    <property type="term" value="C:cytoplasm"/>
    <property type="evidence" value="ECO:0007669"/>
    <property type="project" value="TreeGrafter"/>
</dbReference>
<dbReference type="GO" id="GO:0005525">
    <property type="term" value="F:GTP binding"/>
    <property type="evidence" value="ECO:0007669"/>
    <property type="project" value="UniProtKB-KW"/>
</dbReference>
<dbReference type="GO" id="GO:0003934">
    <property type="term" value="F:GTP cyclohydrolase I activity"/>
    <property type="evidence" value="ECO:0007669"/>
    <property type="project" value="UniProtKB-UniRule"/>
</dbReference>
<dbReference type="GO" id="GO:0008270">
    <property type="term" value="F:zinc ion binding"/>
    <property type="evidence" value="ECO:0007669"/>
    <property type="project" value="UniProtKB-UniRule"/>
</dbReference>
<dbReference type="GO" id="GO:0006730">
    <property type="term" value="P:one-carbon metabolic process"/>
    <property type="evidence" value="ECO:0007669"/>
    <property type="project" value="UniProtKB-UniRule"/>
</dbReference>
<dbReference type="GO" id="GO:0006729">
    <property type="term" value="P:tetrahydrobiopterin biosynthetic process"/>
    <property type="evidence" value="ECO:0007669"/>
    <property type="project" value="TreeGrafter"/>
</dbReference>
<dbReference type="GO" id="GO:0046654">
    <property type="term" value="P:tetrahydrofolate biosynthetic process"/>
    <property type="evidence" value="ECO:0007669"/>
    <property type="project" value="UniProtKB-UniRule"/>
</dbReference>
<dbReference type="FunFam" id="1.10.286.10:FF:000002">
    <property type="entry name" value="GTP cyclohydrolase 1"/>
    <property type="match status" value="1"/>
</dbReference>
<dbReference type="FunFam" id="3.30.1130.10:FF:000001">
    <property type="entry name" value="GTP cyclohydrolase 1"/>
    <property type="match status" value="1"/>
</dbReference>
<dbReference type="Gene3D" id="1.10.286.10">
    <property type="match status" value="1"/>
</dbReference>
<dbReference type="Gene3D" id="3.30.1130.10">
    <property type="match status" value="1"/>
</dbReference>
<dbReference type="HAMAP" id="MF_00223">
    <property type="entry name" value="FolE"/>
    <property type="match status" value="1"/>
</dbReference>
<dbReference type="InterPro" id="IPR043133">
    <property type="entry name" value="GTP-CH-I_C/QueF"/>
</dbReference>
<dbReference type="InterPro" id="IPR043134">
    <property type="entry name" value="GTP-CH-I_N"/>
</dbReference>
<dbReference type="InterPro" id="IPR001474">
    <property type="entry name" value="GTP_CycHdrlase_I"/>
</dbReference>
<dbReference type="InterPro" id="IPR018234">
    <property type="entry name" value="GTP_CycHdrlase_I_CS"/>
</dbReference>
<dbReference type="InterPro" id="IPR020602">
    <property type="entry name" value="GTP_CycHdrlase_I_dom"/>
</dbReference>
<dbReference type="NCBIfam" id="TIGR00063">
    <property type="entry name" value="folE"/>
    <property type="match status" value="1"/>
</dbReference>
<dbReference type="NCBIfam" id="NF006824">
    <property type="entry name" value="PRK09347.1-1"/>
    <property type="match status" value="1"/>
</dbReference>
<dbReference type="NCBIfam" id="NF006825">
    <property type="entry name" value="PRK09347.1-2"/>
    <property type="match status" value="1"/>
</dbReference>
<dbReference type="NCBIfam" id="NF006826">
    <property type="entry name" value="PRK09347.1-3"/>
    <property type="match status" value="1"/>
</dbReference>
<dbReference type="PANTHER" id="PTHR11109:SF7">
    <property type="entry name" value="GTP CYCLOHYDROLASE 1"/>
    <property type="match status" value="1"/>
</dbReference>
<dbReference type="PANTHER" id="PTHR11109">
    <property type="entry name" value="GTP CYCLOHYDROLASE I"/>
    <property type="match status" value="1"/>
</dbReference>
<dbReference type="Pfam" id="PF01227">
    <property type="entry name" value="GTP_cyclohydroI"/>
    <property type="match status" value="1"/>
</dbReference>
<dbReference type="SUPFAM" id="SSF55620">
    <property type="entry name" value="Tetrahydrobiopterin biosynthesis enzymes-like"/>
    <property type="match status" value="1"/>
</dbReference>
<dbReference type="PROSITE" id="PS00859">
    <property type="entry name" value="GTP_CYCLOHYDROL_1_1"/>
    <property type="match status" value="1"/>
</dbReference>
<dbReference type="PROSITE" id="PS00860">
    <property type="entry name" value="GTP_CYCLOHYDROL_1_2"/>
    <property type="match status" value="1"/>
</dbReference>
<feature type="chain" id="PRO_1000100213" description="GTP cyclohydrolase 1">
    <location>
        <begin position="1"/>
        <end position="220"/>
    </location>
</feature>
<feature type="binding site" evidence="1">
    <location>
        <position position="109"/>
    </location>
    <ligand>
        <name>Zn(2+)</name>
        <dbReference type="ChEBI" id="CHEBI:29105"/>
    </ligand>
</feature>
<feature type="binding site" evidence="1">
    <location>
        <position position="112"/>
    </location>
    <ligand>
        <name>Zn(2+)</name>
        <dbReference type="ChEBI" id="CHEBI:29105"/>
    </ligand>
</feature>
<feature type="binding site" evidence="1">
    <location>
        <position position="180"/>
    </location>
    <ligand>
        <name>Zn(2+)</name>
        <dbReference type="ChEBI" id="CHEBI:29105"/>
    </ligand>
</feature>
<organism>
    <name type="scientific">Yersinia pestis bv. Antiqua (strain Angola)</name>
    <dbReference type="NCBI Taxonomy" id="349746"/>
    <lineage>
        <taxon>Bacteria</taxon>
        <taxon>Pseudomonadati</taxon>
        <taxon>Pseudomonadota</taxon>
        <taxon>Gammaproteobacteria</taxon>
        <taxon>Enterobacterales</taxon>
        <taxon>Yersiniaceae</taxon>
        <taxon>Yersinia</taxon>
    </lineage>
</organism>
<name>GCH1_YERPG</name>
<comment type="catalytic activity">
    <reaction evidence="1">
        <text>GTP + H2O = 7,8-dihydroneopterin 3'-triphosphate + formate + H(+)</text>
        <dbReference type="Rhea" id="RHEA:17473"/>
        <dbReference type="ChEBI" id="CHEBI:15377"/>
        <dbReference type="ChEBI" id="CHEBI:15378"/>
        <dbReference type="ChEBI" id="CHEBI:15740"/>
        <dbReference type="ChEBI" id="CHEBI:37565"/>
        <dbReference type="ChEBI" id="CHEBI:58462"/>
        <dbReference type="EC" id="3.5.4.16"/>
    </reaction>
</comment>
<comment type="pathway">
    <text evidence="1">Cofactor biosynthesis; 7,8-dihydroneopterin triphosphate biosynthesis; 7,8-dihydroneopterin triphosphate from GTP: step 1/1.</text>
</comment>
<comment type="subunit">
    <text evidence="1">Homomer.</text>
</comment>
<comment type="similarity">
    <text evidence="1">Belongs to the GTP cyclohydrolase I family.</text>
</comment>
<gene>
    <name evidence="1" type="primary">folE</name>
    <name type="ordered locus">YpAngola_A3014</name>
</gene>
<sequence>MSSLSKEAELVHQALLARGLETPLRKPELDAETRKTRIQAHMTEVMHLLNLDLTDDSLADTPRRIAKMYVDEIFSGLDYENFPKITLIQNKMKVDEMVTVRDITLTSTCEHHFVTIDGKATVAYIPKDSVIGLSKINRIVQFFAQRPQVQERLTQQILLALQTLLGTNNVAVSIDAVHYCVKARGIRDATSATTTTSLGGLFKSSQNTRQEFLRAVRHHG</sequence>
<reference key="1">
    <citation type="journal article" date="2010" name="J. Bacteriol.">
        <title>Genome sequence of the deep-rooted Yersinia pestis strain Angola reveals new insights into the evolution and pangenome of the plague bacterium.</title>
        <authorList>
            <person name="Eppinger M."/>
            <person name="Worsham P.L."/>
            <person name="Nikolich M.P."/>
            <person name="Riley D.R."/>
            <person name="Sebastian Y."/>
            <person name="Mou S."/>
            <person name="Achtman M."/>
            <person name="Lindler L.E."/>
            <person name="Ravel J."/>
        </authorList>
    </citation>
    <scope>NUCLEOTIDE SEQUENCE [LARGE SCALE GENOMIC DNA]</scope>
    <source>
        <strain>Angola</strain>
    </source>
</reference>
<protein>
    <recommendedName>
        <fullName evidence="1">GTP cyclohydrolase 1</fullName>
        <ecNumber evidence="1">3.5.4.16</ecNumber>
    </recommendedName>
    <alternativeName>
        <fullName evidence="1">GTP cyclohydrolase I</fullName>
        <shortName evidence="1">GTP-CH-I</shortName>
    </alternativeName>
</protein>
<accession>A9R1B1</accession>
<proteinExistence type="inferred from homology"/>